<keyword id="KW-0325">Glycoprotein</keyword>
<keyword id="KW-0472">Membrane</keyword>
<keyword id="KW-0560">Oxidoreductase</keyword>
<keyword id="KW-0812">Transmembrane</keyword>
<keyword id="KW-1133">Transmembrane helix</keyword>
<keyword id="KW-0843">Virulence</keyword>
<feature type="chain" id="PRO_0000438577" description="Fatty acid hydroxylase vlmA">
    <location>
        <begin position="1"/>
        <end position="365"/>
    </location>
</feature>
<feature type="transmembrane region" description="Helical" evidence="1">
    <location>
        <begin position="62"/>
        <end position="82"/>
    </location>
</feature>
<feature type="transmembrane region" description="Helical" evidence="1">
    <location>
        <begin position="89"/>
        <end position="109"/>
    </location>
</feature>
<feature type="transmembrane region" description="Helical" evidence="1">
    <location>
        <begin position="144"/>
        <end position="164"/>
    </location>
</feature>
<feature type="transmembrane region" description="Helical" evidence="1">
    <location>
        <begin position="179"/>
        <end position="199"/>
    </location>
</feature>
<feature type="domain" description="Fatty acid hydroxylase" evidence="1">
    <location>
        <begin position="189"/>
        <end position="335"/>
    </location>
</feature>
<feature type="region of interest" description="Disordered" evidence="3">
    <location>
        <begin position="20"/>
        <end position="41"/>
    </location>
</feature>
<feature type="glycosylation site" description="N-linked (GlcNAc...) asparagine" evidence="2">
    <location>
        <position position="47"/>
    </location>
</feature>
<evidence type="ECO:0000255" key="1"/>
<evidence type="ECO:0000255" key="2">
    <source>
        <dbReference type="PROSITE-ProRule" id="PRU00498"/>
    </source>
</evidence>
<evidence type="ECO:0000256" key="3">
    <source>
        <dbReference type="SAM" id="MobiDB-lite"/>
    </source>
</evidence>
<evidence type="ECO:0000269" key="4">
    <source>
    </source>
</evidence>
<evidence type="ECO:0000303" key="5">
    <source>
    </source>
</evidence>
<evidence type="ECO:0000305" key="6"/>
<evidence type="ECO:0000305" key="7">
    <source>
    </source>
</evidence>
<gene>
    <name evidence="5" type="primary">vlmA</name>
</gene>
<proteinExistence type="inferred from homology"/>
<comment type="function">
    <text evidence="4">Fatty acid hydroxylase; part of the gene cluster that mediates the biosynthesis of verlamelin, a lipopeptide that exhibits antifungal activity against plant pathogenic fungi (PubMed:24848421). Verlamelin is a cyclic hexadepsipeptide and is bridged by ester bonding between a 5-hydroxytetradecanoic acid moiety and a carboxyl group on the terminal Val of amide-bonded tetradecanoyl-hexapeptide D-allo-Thr-D-Ala-L-Pro-L-Gln-D-Tyr-L-Val (PubMed:24848421). VlmA and vlmB are altogether regarded as essential components in the biosynthesis of 5-hydroxytetradecanoic acid (PubMed:24848421). VlmA catalyzes the hydroxylation at position C5 of tetradecanoic acid produced in primary metabolism, while the precise function of vlmB still remains to be solved (PubMed:24848421). To be loaded onto the waiting NRPS, 5-hydroxytetradecanoic acid is activated in the form of acyladenylate by the AMP-dependent ligase vlmC (PubMed:24848421). VlmS seems to accept the fatty-acyl intermediate onto the initial module to further elongate amino acid residues by the downstream modules (PubMed:24848421). In addition, in the last module at its C-terminus, vlmS contains a surplus condensation (C) domain that may be involved in cyclization, the last step to form verlamelin (PubMed:24848421).</text>
</comment>
<comment type="pathway">
    <text evidence="4">Secondary metabolite biosynthesis.</text>
</comment>
<comment type="subcellular location">
    <subcellularLocation>
        <location evidence="1">Membrane</location>
        <topology evidence="1">Multi-pass membrane protein</topology>
    </subcellularLocation>
</comment>
<comment type="disruption phenotype">
    <text evidence="4">Leads to complete loss of verlamelin production (PubMed:24848421).</text>
</comment>
<comment type="similarity">
    <text evidence="6">Belongs to the sterol desaturase family. TMEM195 subfamily.</text>
</comment>
<dbReference type="EC" id="1.-.-.-" evidence="7"/>
<dbReference type="EMBL" id="AB862313">
    <property type="protein sequence ID" value="BAO73253.1"/>
    <property type="molecule type" value="Genomic_DNA"/>
</dbReference>
<dbReference type="GlyCosmos" id="A0A024FA41">
    <property type="glycosylation" value="1 site, No reported glycans"/>
</dbReference>
<dbReference type="GO" id="GO:0016020">
    <property type="term" value="C:membrane"/>
    <property type="evidence" value="ECO:0007669"/>
    <property type="project" value="UniProtKB-SubCell"/>
</dbReference>
<dbReference type="GO" id="GO:0005506">
    <property type="term" value="F:iron ion binding"/>
    <property type="evidence" value="ECO:0007669"/>
    <property type="project" value="InterPro"/>
</dbReference>
<dbReference type="GO" id="GO:0016491">
    <property type="term" value="F:oxidoreductase activity"/>
    <property type="evidence" value="ECO:0007669"/>
    <property type="project" value="UniProtKB-KW"/>
</dbReference>
<dbReference type="GO" id="GO:0008610">
    <property type="term" value="P:lipid biosynthetic process"/>
    <property type="evidence" value="ECO:0007669"/>
    <property type="project" value="InterPro"/>
</dbReference>
<dbReference type="InterPro" id="IPR006694">
    <property type="entry name" value="Fatty_acid_hydroxylase"/>
</dbReference>
<dbReference type="InterPro" id="IPR050307">
    <property type="entry name" value="Sterol_Desaturase_Related"/>
</dbReference>
<dbReference type="PANTHER" id="PTHR11863">
    <property type="entry name" value="STEROL DESATURASE"/>
    <property type="match status" value="1"/>
</dbReference>
<dbReference type="Pfam" id="PF04116">
    <property type="entry name" value="FA_hydroxylase"/>
    <property type="match status" value="1"/>
</dbReference>
<reference key="1">
    <citation type="journal article" date="2014" name="Appl. Microbiol. Biotechnol.">
        <title>Identification of a gene cluster responsible for the biosynthesis of cyclic lipopeptide verlamelin.</title>
        <authorList>
            <person name="Ishidoh K."/>
            <person name="Kinoshita H."/>
            <person name="Nihira T."/>
        </authorList>
    </citation>
    <scope>NUCLEOTIDE SEQUENCE [GENOMIC DNA]</scope>
    <scope>FUNCTION</scope>
    <scope>DISRUPTION PHENOTYPE</scope>
    <scope>PATHWAY</scope>
    <source>
        <strain>HF627</strain>
    </source>
</reference>
<accession>A0A024FA41</accession>
<sequence>MPSTTQTTVQSIDSIDSIPTTIKRRQNDKTKTPKTKPVSKIPICPKNSSIPRLDQPSQHKFILLQSLLPITVHQLTTLVLSISRYDDYVHPFLLRLCVIIGYGYAFRFLLRREGLAIRTLGKKLGYLDGDHHPRDKVPRDSTRLNWSLPLTVGSRTVMCVLVAYDPSQQPINYLASLKWWAWLAVYLSLYPIILDFYYYCVHRAWHEVPCLWRFHRRHHTIKRPSILFTAYADSEQELFDIVGTPLLTFFTLKALHLPMDFYTWWICIQYIAYTEVMGHSGLRIYTTPPISCSWLLQRFGVELVIEDHDLHHRQGYRQARNYGKQTRIWDRLFGTCADRIETNPVNIQKGRRVMMHSINIPSLGN</sequence>
<organism>
    <name type="scientific">Lecanicillium sp</name>
    <dbReference type="NCBI Taxonomy" id="1756136"/>
    <lineage>
        <taxon>Eukaryota</taxon>
        <taxon>Fungi</taxon>
        <taxon>Dikarya</taxon>
        <taxon>Ascomycota</taxon>
        <taxon>Pezizomycotina</taxon>
        <taxon>Sordariomycetes</taxon>
        <taxon>Hypocreomycetidae</taxon>
        <taxon>Hypocreales</taxon>
        <taxon>Cordycipitaceae</taxon>
        <taxon>Lecanicillium</taxon>
    </lineage>
</organism>
<protein>
    <recommendedName>
        <fullName evidence="5">Fatty acid hydroxylase vlmA</fullName>
        <ecNumber evidence="7">1.-.-.-</ecNumber>
    </recommendedName>
    <alternativeName>
        <fullName evidence="5">Verlamelin biosynthesis protein A</fullName>
    </alternativeName>
</protein>
<name>VLMA_LECSP</name>